<sequence>MEEEEVYIDVNSPVALKVHPSKDLMKFLLSENANLKMASFFTEFEKGFMDIIVGIKIRYKDLSRELLKFVVLNIGNLANEYGKEIRAVFGGLSFKEYLEREKYSYPYSGEKLFQEKISINGTLLLLEVYVKEENYTLICREEGSSNYLIKAIRKVEGPYEALKILEKAKESIKNRDFVSLRKLFSPYEVDFFELYSVFLKGKDTTKLKKLEKEIHELPYMLINGKITYEEYKKRIREIEKEIGLSE</sequence>
<dbReference type="EMBL" id="AE000657">
    <property type="protein sequence ID" value="AAC06527.1"/>
    <property type="molecule type" value="Genomic_DNA"/>
</dbReference>
<dbReference type="PIR" id="C70316">
    <property type="entry name" value="C70316"/>
</dbReference>
<dbReference type="RefSeq" id="NP_213118.1">
    <property type="nucleotide sequence ID" value="NC_000918.1"/>
</dbReference>
<dbReference type="RefSeq" id="WP_010880056.1">
    <property type="nucleotide sequence ID" value="NC_000918.1"/>
</dbReference>
<dbReference type="SMR" id="O66558"/>
<dbReference type="STRING" id="224324.aq_171"/>
<dbReference type="EnsemblBacteria" id="AAC06527">
    <property type="protein sequence ID" value="AAC06527"/>
    <property type="gene ID" value="aq_171"/>
</dbReference>
<dbReference type="KEGG" id="aae:aq_171"/>
<dbReference type="HOGENOM" id="CLU_1127262_0_0_0"/>
<dbReference type="InParanoid" id="O66558"/>
<dbReference type="OrthoDB" id="459459at2"/>
<dbReference type="Proteomes" id="UP000000798">
    <property type="component" value="Chromosome"/>
</dbReference>
<dbReference type="Gene3D" id="3.30.1460.10">
    <property type="match status" value="1"/>
</dbReference>
<evidence type="ECO:0000255" key="1"/>
<accession>O66558</accession>
<protein>
    <recommendedName>
        <fullName>Uncharacterized protein aq_171</fullName>
    </recommendedName>
</protein>
<gene>
    <name type="ordered locus">aq_171</name>
</gene>
<proteinExistence type="predicted"/>
<reference key="1">
    <citation type="journal article" date="1998" name="Nature">
        <title>The complete genome of the hyperthermophilic bacterium Aquifex aeolicus.</title>
        <authorList>
            <person name="Deckert G."/>
            <person name="Warren P.V."/>
            <person name="Gaasterland T."/>
            <person name="Young W.G."/>
            <person name="Lenox A.L."/>
            <person name="Graham D.E."/>
            <person name="Overbeek R."/>
            <person name="Snead M.A."/>
            <person name="Keller M."/>
            <person name="Aujay M."/>
            <person name="Huber R."/>
            <person name="Feldman R.A."/>
            <person name="Short J.M."/>
            <person name="Olsen G.J."/>
            <person name="Swanson R.V."/>
        </authorList>
    </citation>
    <scope>NUCLEOTIDE SEQUENCE [LARGE SCALE GENOMIC DNA]</scope>
    <source>
        <strain>VF5</strain>
    </source>
</reference>
<keyword id="KW-0175">Coiled coil</keyword>
<keyword id="KW-1185">Reference proteome</keyword>
<name>Y171_AQUAE</name>
<organism>
    <name type="scientific">Aquifex aeolicus (strain VF5)</name>
    <dbReference type="NCBI Taxonomy" id="224324"/>
    <lineage>
        <taxon>Bacteria</taxon>
        <taxon>Pseudomonadati</taxon>
        <taxon>Aquificota</taxon>
        <taxon>Aquificia</taxon>
        <taxon>Aquificales</taxon>
        <taxon>Aquificaceae</taxon>
        <taxon>Aquifex</taxon>
    </lineage>
</organism>
<feature type="chain" id="PRO_0000186843" description="Uncharacterized protein aq_171">
    <location>
        <begin position="1"/>
        <end position="246"/>
    </location>
</feature>
<feature type="coiled-coil region" evidence="1">
    <location>
        <begin position="204"/>
        <end position="243"/>
    </location>
</feature>